<feature type="chain" id="PRO_0000137465" description="Translation initiation factor 2 subunit gamma">
    <location>
        <begin position="1"/>
        <end position="411"/>
    </location>
</feature>
<feature type="domain" description="tr-type G" evidence="1">
    <location>
        <begin position="9"/>
        <end position="201"/>
    </location>
</feature>
<feature type="region of interest" description="G1" evidence="1">
    <location>
        <begin position="18"/>
        <end position="25"/>
    </location>
</feature>
<feature type="region of interest" description="G2" evidence="1">
    <location>
        <begin position="46"/>
        <end position="50"/>
    </location>
</feature>
<feature type="region of interest" description="G3" evidence="1">
    <location>
        <begin position="88"/>
        <end position="91"/>
    </location>
</feature>
<feature type="region of interest" description="G4" evidence="1">
    <location>
        <begin position="144"/>
        <end position="147"/>
    </location>
</feature>
<feature type="region of interest" description="G5" evidence="1">
    <location>
        <begin position="179"/>
        <end position="181"/>
    </location>
</feature>
<feature type="binding site" evidence="1">
    <location>
        <begin position="21"/>
        <end position="26"/>
    </location>
    <ligand>
        <name>GTP</name>
        <dbReference type="ChEBI" id="CHEBI:37565"/>
    </ligand>
</feature>
<feature type="binding site" evidence="1">
    <location>
        <position position="21"/>
    </location>
    <ligand>
        <name>Mg(2+)</name>
        <dbReference type="ChEBI" id="CHEBI:18420"/>
        <label>2</label>
    </ligand>
</feature>
<feature type="binding site" evidence="1">
    <location>
        <position position="25"/>
    </location>
    <ligand>
        <name>Mg(2+)</name>
        <dbReference type="ChEBI" id="CHEBI:18420"/>
        <label>1</label>
    </ligand>
</feature>
<feature type="binding site" evidence="1">
    <location>
        <position position="46"/>
    </location>
    <ligand>
        <name>Mg(2+)</name>
        <dbReference type="ChEBI" id="CHEBI:18420"/>
        <label>2</label>
    </ligand>
</feature>
<feature type="binding site" evidence="1">
    <location>
        <position position="48"/>
    </location>
    <ligand>
        <name>Mg(2+)</name>
        <dbReference type="ChEBI" id="CHEBI:18420"/>
        <label>1</label>
    </ligand>
</feature>
<feature type="binding site" evidence="1">
    <location>
        <begin position="144"/>
        <end position="147"/>
    </location>
    <ligand>
        <name>GTP</name>
        <dbReference type="ChEBI" id="CHEBI:37565"/>
    </ligand>
</feature>
<feature type="binding site" evidence="1">
    <location>
        <begin position="179"/>
        <end position="181"/>
    </location>
    <ligand>
        <name>GTP</name>
        <dbReference type="ChEBI" id="CHEBI:37565"/>
    </ligand>
</feature>
<name>IF2G_THEAC</name>
<reference key="1">
    <citation type="journal article" date="2000" name="Nature">
        <title>The genome sequence of the thermoacidophilic scavenger Thermoplasma acidophilum.</title>
        <authorList>
            <person name="Ruepp A."/>
            <person name="Graml W."/>
            <person name="Santos-Martinez M.-L."/>
            <person name="Koretke K.K."/>
            <person name="Volker C."/>
            <person name="Mewes H.-W."/>
            <person name="Frishman D."/>
            <person name="Stocker S."/>
            <person name="Lupas A.N."/>
            <person name="Baumeister W."/>
        </authorList>
    </citation>
    <scope>NUCLEOTIDE SEQUENCE [LARGE SCALE GENOMIC DNA]</scope>
    <source>
        <strain>ATCC 25905 / DSM 1728 / JCM 9062 / NBRC 15155 / AMRC-C165</strain>
    </source>
</reference>
<sequence>MISKLKMPQPSVNIGMVGHVDHGKSTLTLALTGTKTDTHSEEIKRGISIKLGYADTPIYRCYDSSGNVHYTREKGENCDLERVISIVDAPGHETLMATMLSGSALMNGALLVIAANEHCPQPQTREHLTALEIMGIKNIIIVQNKIDLVTRERAIESYREIKNFVKGSIAENAPIIPVSAYHSTNIDALFEAIEKYIPSPKFNENDDPIMYIARSFDINRPGTPVSELKGGVIGGSLTQGEFALGDEIEIVPGIQTTKGNKTVWNNVTTEVVSLMAGKYSYDRIRPGGLAAIGTKLDPFLTKGDAFTGRIAGHVGKVPPVAFSMRLESHLLKRVVGSDQELNVEPIRPKETLMFTVATANTVGVVNAMKGSEIEVSLKYPVAAFNGMRVAIGRRVMNRWRLIGYGIIQSLE</sequence>
<gene>
    <name evidence="1" type="primary">eif2g</name>
    <name type="ordered locus">Ta0322</name>
</gene>
<dbReference type="EC" id="3.6.5.3" evidence="1"/>
<dbReference type="EMBL" id="AL445063">
    <property type="protein sequence ID" value="CAC11467.1"/>
    <property type="molecule type" value="Genomic_DNA"/>
</dbReference>
<dbReference type="RefSeq" id="WP_010900751.1">
    <property type="nucleotide sequence ID" value="NC_002578.1"/>
</dbReference>
<dbReference type="SMR" id="Q9HLA7"/>
<dbReference type="FunCoup" id="Q9HLA7">
    <property type="interactions" value="183"/>
</dbReference>
<dbReference type="STRING" id="273075.gene:9571540"/>
<dbReference type="PaxDb" id="273075-Ta0322"/>
<dbReference type="EnsemblBacteria" id="CAC11467">
    <property type="protein sequence ID" value="CAC11467"/>
    <property type="gene ID" value="CAC11467"/>
</dbReference>
<dbReference type="KEGG" id="tac:Ta0322"/>
<dbReference type="eggNOG" id="arCOG01563">
    <property type="taxonomic scope" value="Archaea"/>
</dbReference>
<dbReference type="HOGENOM" id="CLU_027154_0_1_2"/>
<dbReference type="InParanoid" id="Q9HLA7"/>
<dbReference type="OrthoDB" id="7798at2157"/>
<dbReference type="Proteomes" id="UP000001024">
    <property type="component" value="Chromosome"/>
</dbReference>
<dbReference type="GO" id="GO:0005829">
    <property type="term" value="C:cytosol"/>
    <property type="evidence" value="ECO:0007669"/>
    <property type="project" value="TreeGrafter"/>
</dbReference>
<dbReference type="GO" id="GO:0005525">
    <property type="term" value="F:GTP binding"/>
    <property type="evidence" value="ECO:0007669"/>
    <property type="project" value="UniProtKB-UniRule"/>
</dbReference>
<dbReference type="GO" id="GO:0003924">
    <property type="term" value="F:GTPase activity"/>
    <property type="evidence" value="ECO:0007669"/>
    <property type="project" value="InterPro"/>
</dbReference>
<dbReference type="GO" id="GO:0046872">
    <property type="term" value="F:metal ion binding"/>
    <property type="evidence" value="ECO:0007669"/>
    <property type="project" value="UniProtKB-KW"/>
</dbReference>
<dbReference type="GO" id="GO:0003746">
    <property type="term" value="F:translation elongation factor activity"/>
    <property type="evidence" value="ECO:0007669"/>
    <property type="project" value="UniProtKB-UniRule"/>
</dbReference>
<dbReference type="GO" id="GO:0003743">
    <property type="term" value="F:translation initiation factor activity"/>
    <property type="evidence" value="ECO:0007669"/>
    <property type="project" value="UniProtKB-KW"/>
</dbReference>
<dbReference type="GO" id="GO:0000049">
    <property type="term" value="F:tRNA binding"/>
    <property type="evidence" value="ECO:0007669"/>
    <property type="project" value="InterPro"/>
</dbReference>
<dbReference type="GO" id="GO:0001731">
    <property type="term" value="P:formation of translation preinitiation complex"/>
    <property type="evidence" value="ECO:0007669"/>
    <property type="project" value="TreeGrafter"/>
</dbReference>
<dbReference type="CDD" id="cd01888">
    <property type="entry name" value="eIF2_gamma"/>
    <property type="match status" value="1"/>
</dbReference>
<dbReference type="CDD" id="cd03688">
    <property type="entry name" value="eIF2_gamma_II"/>
    <property type="match status" value="1"/>
</dbReference>
<dbReference type="CDD" id="cd15490">
    <property type="entry name" value="eIF2_gamma_III"/>
    <property type="match status" value="1"/>
</dbReference>
<dbReference type="FunFam" id="3.40.50.300:FF:000065">
    <property type="entry name" value="Eukaryotic translation initiation factor 2 subunit gamma"/>
    <property type="match status" value="1"/>
</dbReference>
<dbReference type="FunFam" id="2.40.30.10:FF:000075">
    <property type="entry name" value="Translation initiation factor 2 subunit gamma"/>
    <property type="match status" value="1"/>
</dbReference>
<dbReference type="Gene3D" id="3.40.50.300">
    <property type="entry name" value="P-loop containing nucleotide triphosphate hydrolases"/>
    <property type="match status" value="1"/>
</dbReference>
<dbReference type="Gene3D" id="2.40.30.10">
    <property type="entry name" value="Translation factors"/>
    <property type="match status" value="2"/>
</dbReference>
<dbReference type="HAMAP" id="MF_00119">
    <property type="entry name" value="eIF_2_gamma"/>
    <property type="match status" value="1"/>
</dbReference>
<dbReference type="InterPro" id="IPR050543">
    <property type="entry name" value="eIF2G"/>
</dbReference>
<dbReference type="InterPro" id="IPR015256">
    <property type="entry name" value="eIF2g_C"/>
</dbReference>
<dbReference type="InterPro" id="IPR044127">
    <property type="entry name" value="eIF2g_dom_2"/>
</dbReference>
<dbReference type="InterPro" id="IPR044128">
    <property type="entry name" value="eIF2g_GTP-bd"/>
</dbReference>
<dbReference type="InterPro" id="IPR027417">
    <property type="entry name" value="P-loop_NTPase"/>
</dbReference>
<dbReference type="InterPro" id="IPR005225">
    <property type="entry name" value="Small_GTP-bd"/>
</dbReference>
<dbReference type="InterPro" id="IPR000795">
    <property type="entry name" value="T_Tr_GTP-bd_dom"/>
</dbReference>
<dbReference type="InterPro" id="IPR022424">
    <property type="entry name" value="TIF2_gsu"/>
</dbReference>
<dbReference type="InterPro" id="IPR009000">
    <property type="entry name" value="Transl_B-barrel_sf"/>
</dbReference>
<dbReference type="InterPro" id="IPR009001">
    <property type="entry name" value="Transl_elong_EF1A/Init_IF2_C"/>
</dbReference>
<dbReference type="NCBIfam" id="TIGR03680">
    <property type="entry name" value="eif2g_arch"/>
    <property type="match status" value="1"/>
</dbReference>
<dbReference type="NCBIfam" id="NF003077">
    <property type="entry name" value="PRK04000.1"/>
    <property type="match status" value="1"/>
</dbReference>
<dbReference type="NCBIfam" id="TIGR00231">
    <property type="entry name" value="small_GTP"/>
    <property type="match status" value="1"/>
</dbReference>
<dbReference type="PANTHER" id="PTHR42854">
    <property type="entry name" value="EUKARYOTIC TRANSLATION INITIATION FACTOR 2 SUBUNIT 3 FAMILY MEMBER"/>
    <property type="match status" value="1"/>
</dbReference>
<dbReference type="PANTHER" id="PTHR42854:SF3">
    <property type="entry name" value="EUKARYOTIC TRANSLATION INITIATION FACTOR 2 SUBUNIT 3-RELATED"/>
    <property type="match status" value="1"/>
</dbReference>
<dbReference type="Pfam" id="PF09173">
    <property type="entry name" value="eIF2_C"/>
    <property type="match status" value="1"/>
</dbReference>
<dbReference type="Pfam" id="PF00009">
    <property type="entry name" value="GTP_EFTU"/>
    <property type="match status" value="1"/>
</dbReference>
<dbReference type="PRINTS" id="PR00315">
    <property type="entry name" value="ELONGATNFCT"/>
</dbReference>
<dbReference type="SUPFAM" id="SSF50465">
    <property type="entry name" value="EF-Tu/eEF-1alpha/eIF2-gamma C-terminal domain"/>
    <property type="match status" value="1"/>
</dbReference>
<dbReference type="SUPFAM" id="SSF52540">
    <property type="entry name" value="P-loop containing nucleoside triphosphate hydrolases"/>
    <property type="match status" value="1"/>
</dbReference>
<dbReference type="SUPFAM" id="SSF50447">
    <property type="entry name" value="Translation proteins"/>
    <property type="match status" value="1"/>
</dbReference>
<dbReference type="PROSITE" id="PS51722">
    <property type="entry name" value="G_TR_2"/>
    <property type="match status" value="1"/>
</dbReference>
<protein>
    <recommendedName>
        <fullName evidence="1">Translation initiation factor 2 subunit gamma</fullName>
        <ecNumber evidence="1">3.6.5.3</ecNumber>
    </recommendedName>
    <alternativeName>
        <fullName evidence="1">aIF2-gamma</fullName>
    </alternativeName>
    <alternativeName>
        <fullName evidence="1">eIF-2-gamma</fullName>
    </alternativeName>
</protein>
<proteinExistence type="inferred from homology"/>
<keyword id="KW-0342">GTP-binding</keyword>
<keyword id="KW-0378">Hydrolase</keyword>
<keyword id="KW-0396">Initiation factor</keyword>
<keyword id="KW-0460">Magnesium</keyword>
<keyword id="KW-0479">Metal-binding</keyword>
<keyword id="KW-0547">Nucleotide-binding</keyword>
<keyword id="KW-0648">Protein biosynthesis</keyword>
<keyword id="KW-1185">Reference proteome</keyword>
<accession>Q9HLA7</accession>
<comment type="function">
    <text evidence="1">eIF-2 functions in the early steps of protein synthesis by forming a ternary complex with GTP and initiator tRNA.</text>
</comment>
<comment type="catalytic activity">
    <reaction evidence="1">
        <text>GTP + H2O = GDP + phosphate + H(+)</text>
        <dbReference type="Rhea" id="RHEA:19669"/>
        <dbReference type="ChEBI" id="CHEBI:15377"/>
        <dbReference type="ChEBI" id="CHEBI:15378"/>
        <dbReference type="ChEBI" id="CHEBI:37565"/>
        <dbReference type="ChEBI" id="CHEBI:43474"/>
        <dbReference type="ChEBI" id="CHEBI:58189"/>
        <dbReference type="EC" id="3.6.5.3"/>
    </reaction>
</comment>
<comment type="cofactor">
    <cofactor evidence="1">
        <name>Mg(2+)</name>
        <dbReference type="ChEBI" id="CHEBI:18420"/>
    </cofactor>
</comment>
<comment type="subunit">
    <text evidence="1">Heterotrimer composed of an alpha, a beta and a gamma chain.</text>
</comment>
<comment type="similarity">
    <text evidence="1 2">Belongs to the TRAFAC class translation factor GTPase superfamily. Classic translation factor GTPase family. EIF2G subfamily.</text>
</comment>
<evidence type="ECO:0000255" key="1">
    <source>
        <dbReference type="HAMAP-Rule" id="MF_00119"/>
    </source>
</evidence>
<evidence type="ECO:0000305" key="2"/>
<organism>
    <name type="scientific">Thermoplasma acidophilum (strain ATCC 25905 / DSM 1728 / JCM 9062 / NBRC 15155 / AMRC-C165)</name>
    <dbReference type="NCBI Taxonomy" id="273075"/>
    <lineage>
        <taxon>Archaea</taxon>
        <taxon>Methanobacteriati</taxon>
        <taxon>Thermoplasmatota</taxon>
        <taxon>Thermoplasmata</taxon>
        <taxon>Thermoplasmatales</taxon>
        <taxon>Thermoplasmataceae</taxon>
        <taxon>Thermoplasma</taxon>
    </lineage>
</organism>